<feature type="chain" id="PRO_0000141193" description="Ribose-phosphate pyrophosphokinase">
    <location>
        <begin position="1"/>
        <end position="321"/>
    </location>
</feature>
<feature type="active site" evidence="1">
    <location>
        <position position="202"/>
    </location>
</feature>
<feature type="binding site" evidence="1">
    <location>
        <begin position="44"/>
        <end position="46"/>
    </location>
    <ligand>
        <name>ATP</name>
        <dbReference type="ChEBI" id="CHEBI:30616"/>
    </ligand>
</feature>
<feature type="binding site" evidence="1">
    <location>
        <begin position="103"/>
        <end position="104"/>
    </location>
    <ligand>
        <name>ATP</name>
        <dbReference type="ChEBI" id="CHEBI:30616"/>
    </ligand>
</feature>
<feature type="binding site" evidence="1">
    <location>
        <position position="137"/>
    </location>
    <ligand>
        <name>Mg(2+)</name>
        <dbReference type="ChEBI" id="CHEBI:18420"/>
        <label>1</label>
    </ligand>
</feature>
<feature type="binding site" evidence="1">
    <location>
        <position position="179"/>
    </location>
    <ligand>
        <name>Mg(2+)</name>
        <dbReference type="ChEBI" id="CHEBI:18420"/>
        <label>2</label>
    </ligand>
</feature>
<feature type="binding site" evidence="1">
    <location>
        <position position="204"/>
    </location>
    <ligand>
        <name>D-ribose 5-phosphate</name>
        <dbReference type="ChEBI" id="CHEBI:78346"/>
    </ligand>
</feature>
<feature type="binding site" evidence="1">
    <location>
        <position position="228"/>
    </location>
    <ligand>
        <name>D-ribose 5-phosphate</name>
        <dbReference type="ChEBI" id="CHEBI:78346"/>
    </ligand>
</feature>
<feature type="binding site" evidence="1">
    <location>
        <begin position="232"/>
        <end position="236"/>
    </location>
    <ligand>
        <name>D-ribose 5-phosphate</name>
        <dbReference type="ChEBI" id="CHEBI:78346"/>
    </ligand>
</feature>
<gene>
    <name evidence="1" type="primary">prs</name>
    <name type="ordered locus">SERP0138</name>
</gene>
<dbReference type="EC" id="2.7.6.1" evidence="1"/>
<dbReference type="EMBL" id="CP000029">
    <property type="protein sequence ID" value="AAW53490.1"/>
    <property type="molecule type" value="Genomic_DNA"/>
</dbReference>
<dbReference type="RefSeq" id="WP_001832233.1">
    <property type="nucleotide sequence ID" value="NC_002976.3"/>
</dbReference>
<dbReference type="SMR" id="Q5HRQ5"/>
<dbReference type="STRING" id="176279.SERP0138"/>
<dbReference type="KEGG" id="ser:SERP0138"/>
<dbReference type="eggNOG" id="COG0462">
    <property type="taxonomic scope" value="Bacteria"/>
</dbReference>
<dbReference type="HOGENOM" id="CLU_033546_1_0_9"/>
<dbReference type="UniPathway" id="UPA00087">
    <property type="reaction ID" value="UER00172"/>
</dbReference>
<dbReference type="Proteomes" id="UP000000531">
    <property type="component" value="Chromosome"/>
</dbReference>
<dbReference type="GO" id="GO:0005737">
    <property type="term" value="C:cytoplasm"/>
    <property type="evidence" value="ECO:0007669"/>
    <property type="project" value="UniProtKB-SubCell"/>
</dbReference>
<dbReference type="GO" id="GO:0002189">
    <property type="term" value="C:ribose phosphate diphosphokinase complex"/>
    <property type="evidence" value="ECO:0007669"/>
    <property type="project" value="TreeGrafter"/>
</dbReference>
<dbReference type="GO" id="GO:0005524">
    <property type="term" value="F:ATP binding"/>
    <property type="evidence" value="ECO:0007669"/>
    <property type="project" value="UniProtKB-KW"/>
</dbReference>
<dbReference type="GO" id="GO:0016301">
    <property type="term" value="F:kinase activity"/>
    <property type="evidence" value="ECO:0007669"/>
    <property type="project" value="UniProtKB-KW"/>
</dbReference>
<dbReference type="GO" id="GO:0000287">
    <property type="term" value="F:magnesium ion binding"/>
    <property type="evidence" value="ECO:0007669"/>
    <property type="project" value="UniProtKB-UniRule"/>
</dbReference>
<dbReference type="GO" id="GO:0004749">
    <property type="term" value="F:ribose phosphate diphosphokinase activity"/>
    <property type="evidence" value="ECO:0007669"/>
    <property type="project" value="UniProtKB-UniRule"/>
</dbReference>
<dbReference type="GO" id="GO:0006015">
    <property type="term" value="P:5-phosphoribose 1-diphosphate biosynthetic process"/>
    <property type="evidence" value="ECO:0007669"/>
    <property type="project" value="UniProtKB-UniRule"/>
</dbReference>
<dbReference type="GO" id="GO:0006164">
    <property type="term" value="P:purine nucleotide biosynthetic process"/>
    <property type="evidence" value="ECO:0007669"/>
    <property type="project" value="TreeGrafter"/>
</dbReference>
<dbReference type="GO" id="GO:0009156">
    <property type="term" value="P:ribonucleoside monophosphate biosynthetic process"/>
    <property type="evidence" value="ECO:0007669"/>
    <property type="project" value="InterPro"/>
</dbReference>
<dbReference type="CDD" id="cd06223">
    <property type="entry name" value="PRTases_typeI"/>
    <property type="match status" value="1"/>
</dbReference>
<dbReference type="FunFam" id="3.40.50.2020:FF:000001">
    <property type="entry name" value="Ribose-phosphate pyrophosphokinase"/>
    <property type="match status" value="1"/>
</dbReference>
<dbReference type="FunFam" id="3.40.50.2020:FF:000005">
    <property type="entry name" value="Ribose-phosphate pyrophosphokinase 1"/>
    <property type="match status" value="1"/>
</dbReference>
<dbReference type="Gene3D" id="3.40.50.2020">
    <property type="match status" value="2"/>
</dbReference>
<dbReference type="HAMAP" id="MF_00583_B">
    <property type="entry name" value="RibP_PPkinase_B"/>
    <property type="match status" value="1"/>
</dbReference>
<dbReference type="InterPro" id="IPR000842">
    <property type="entry name" value="PRib_PP_synth_CS"/>
</dbReference>
<dbReference type="InterPro" id="IPR029099">
    <property type="entry name" value="Pribosyltran_N"/>
</dbReference>
<dbReference type="InterPro" id="IPR000836">
    <property type="entry name" value="PRibTrfase_dom"/>
</dbReference>
<dbReference type="InterPro" id="IPR029057">
    <property type="entry name" value="PRTase-like"/>
</dbReference>
<dbReference type="InterPro" id="IPR005946">
    <property type="entry name" value="Rib-P_diPkinase"/>
</dbReference>
<dbReference type="InterPro" id="IPR037515">
    <property type="entry name" value="Rib-P_diPkinase_bac"/>
</dbReference>
<dbReference type="NCBIfam" id="NF002320">
    <property type="entry name" value="PRK01259.1"/>
    <property type="match status" value="1"/>
</dbReference>
<dbReference type="NCBIfam" id="NF002618">
    <property type="entry name" value="PRK02269.1"/>
    <property type="match status" value="1"/>
</dbReference>
<dbReference type="NCBIfam" id="TIGR01251">
    <property type="entry name" value="ribP_PPkin"/>
    <property type="match status" value="1"/>
</dbReference>
<dbReference type="PANTHER" id="PTHR10210">
    <property type="entry name" value="RIBOSE-PHOSPHATE DIPHOSPHOKINASE FAMILY MEMBER"/>
    <property type="match status" value="1"/>
</dbReference>
<dbReference type="PANTHER" id="PTHR10210:SF41">
    <property type="entry name" value="RIBOSE-PHOSPHATE PYROPHOSPHOKINASE 1, CHLOROPLASTIC"/>
    <property type="match status" value="1"/>
</dbReference>
<dbReference type="Pfam" id="PF14572">
    <property type="entry name" value="Pribosyl_synth"/>
    <property type="match status" value="1"/>
</dbReference>
<dbReference type="Pfam" id="PF13793">
    <property type="entry name" value="Pribosyltran_N"/>
    <property type="match status" value="1"/>
</dbReference>
<dbReference type="SMART" id="SM01400">
    <property type="entry name" value="Pribosyltran_N"/>
    <property type="match status" value="1"/>
</dbReference>
<dbReference type="SUPFAM" id="SSF53271">
    <property type="entry name" value="PRTase-like"/>
    <property type="match status" value="1"/>
</dbReference>
<dbReference type="PROSITE" id="PS00114">
    <property type="entry name" value="PRPP_SYNTHASE"/>
    <property type="match status" value="1"/>
</dbReference>
<sequence>MLNNEYKNSSMKIFSLKGNEPLAQEVADHVGIELGKCSVKRFSDGEIQINIEESIRGCDVFIVQPTSYPVNLHLMELLIMIDACKRASAANINIVVPYYGYARQDRKARSREPITAKLVANLIETAGANRMIALDLHAPQIQGFFDIPIDHLMGVPILAQHFENDPDINPEECVVVSPDHGGVTRARKLADILKTPIAIIDKRRPKPNVAEVMNIVGDIEGRTAIIIDDIIDTAGTITLAAQALKDKGAKEVYACCTHPVLSGPAKERIENSAIKQLIVTNSIQLEENRKPNNTKELSVAGLIAKAIIRVYERESVSVLFD</sequence>
<comment type="function">
    <text evidence="1">Involved in the biosynthesis of the central metabolite phospho-alpha-D-ribosyl-1-pyrophosphate (PRPP) via the transfer of pyrophosphoryl group from ATP to 1-hydroxyl of ribose-5-phosphate (Rib-5-P).</text>
</comment>
<comment type="catalytic activity">
    <reaction evidence="1">
        <text>D-ribose 5-phosphate + ATP = 5-phospho-alpha-D-ribose 1-diphosphate + AMP + H(+)</text>
        <dbReference type="Rhea" id="RHEA:15609"/>
        <dbReference type="ChEBI" id="CHEBI:15378"/>
        <dbReference type="ChEBI" id="CHEBI:30616"/>
        <dbReference type="ChEBI" id="CHEBI:58017"/>
        <dbReference type="ChEBI" id="CHEBI:78346"/>
        <dbReference type="ChEBI" id="CHEBI:456215"/>
        <dbReference type="EC" id="2.7.6.1"/>
    </reaction>
</comment>
<comment type="cofactor">
    <cofactor evidence="1">
        <name>Mg(2+)</name>
        <dbReference type="ChEBI" id="CHEBI:18420"/>
    </cofactor>
    <text evidence="1">Binds 2 Mg(2+) ions per subunit.</text>
</comment>
<comment type="pathway">
    <text evidence="1">Metabolic intermediate biosynthesis; 5-phospho-alpha-D-ribose 1-diphosphate biosynthesis; 5-phospho-alpha-D-ribose 1-diphosphate from D-ribose 5-phosphate (route I): step 1/1.</text>
</comment>
<comment type="subunit">
    <text evidence="1">Homohexamer.</text>
</comment>
<comment type="subcellular location">
    <subcellularLocation>
        <location evidence="1">Cytoplasm</location>
    </subcellularLocation>
</comment>
<comment type="similarity">
    <text evidence="1">Belongs to the ribose-phosphate pyrophosphokinase family. Class I subfamily.</text>
</comment>
<organism>
    <name type="scientific">Staphylococcus epidermidis (strain ATCC 35984 / DSM 28319 / BCRC 17069 / CCUG 31568 / BM 3577 / RP62A)</name>
    <dbReference type="NCBI Taxonomy" id="176279"/>
    <lineage>
        <taxon>Bacteria</taxon>
        <taxon>Bacillati</taxon>
        <taxon>Bacillota</taxon>
        <taxon>Bacilli</taxon>
        <taxon>Bacillales</taxon>
        <taxon>Staphylococcaceae</taxon>
        <taxon>Staphylococcus</taxon>
    </lineage>
</organism>
<proteinExistence type="inferred from homology"/>
<accession>Q5HRQ5</accession>
<evidence type="ECO:0000255" key="1">
    <source>
        <dbReference type="HAMAP-Rule" id="MF_00583"/>
    </source>
</evidence>
<protein>
    <recommendedName>
        <fullName evidence="1">Ribose-phosphate pyrophosphokinase</fullName>
        <shortName evidence="1">RPPK</shortName>
        <ecNumber evidence="1">2.7.6.1</ecNumber>
    </recommendedName>
    <alternativeName>
        <fullName evidence="1">5-phospho-D-ribosyl alpha-1-diphosphate synthase</fullName>
    </alternativeName>
    <alternativeName>
        <fullName evidence="1">Phosphoribosyl diphosphate synthase</fullName>
    </alternativeName>
    <alternativeName>
        <fullName evidence="1">Phosphoribosyl pyrophosphate synthase</fullName>
        <shortName evidence="1">P-Rib-PP synthase</shortName>
        <shortName evidence="1">PRPP synthase</shortName>
        <shortName evidence="1">PRPPase</shortName>
    </alternativeName>
</protein>
<reference key="1">
    <citation type="journal article" date="2005" name="J. Bacteriol.">
        <title>Insights on evolution of virulence and resistance from the complete genome analysis of an early methicillin-resistant Staphylococcus aureus strain and a biofilm-producing methicillin-resistant Staphylococcus epidermidis strain.</title>
        <authorList>
            <person name="Gill S.R."/>
            <person name="Fouts D.E."/>
            <person name="Archer G.L."/>
            <person name="Mongodin E.F."/>
            <person name="DeBoy R.T."/>
            <person name="Ravel J."/>
            <person name="Paulsen I.T."/>
            <person name="Kolonay J.F."/>
            <person name="Brinkac L.M."/>
            <person name="Beanan M.J."/>
            <person name="Dodson R.J."/>
            <person name="Daugherty S.C."/>
            <person name="Madupu R."/>
            <person name="Angiuoli S.V."/>
            <person name="Durkin A.S."/>
            <person name="Haft D.H."/>
            <person name="Vamathevan J.J."/>
            <person name="Khouri H."/>
            <person name="Utterback T.R."/>
            <person name="Lee C."/>
            <person name="Dimitrov G."/>
            <person name="Jiang L."/>
            <person name="Qin H."/>
            <person name="Weidman J."/>
            <person name="Tran K."/>
            <person name="Kang K.H."/>
            <person name="Hance I.R."/>
            <person name="Nelson K.E."/>
            <person name="Fraser C.M."/>
        </authorList>
    </citation>
    <scope>NUCLEOTIDE SEQUENCE [LARGE SCALE GENOMIC DNA]</scope>
    <source>
        <strain>ATCC 35984 / DSM 28319 / BCRC 17069 / CCUG 31568 / BM 3577 / RP62A</strain>
    </source>
</reference>
<name>KPRS_STAEQ</name>
<keyword id="KW-0067">ATP-binding</keyword>
<keyword id="KW-0963">Cytoplasm</keyword>
<keyword id="KW-0418">Kinase</keyword>
<keyword id="KW-0460">Magnesium</keyword>
<keyword id="KW-0479">Metal-binding</keyword>
<keyword id="KW-0545">Nucleotide biosynthesis</keyword>
<keyword id="KW-0547">Nucleotide-binding</keyword>
<keyword id="KW-1185">Reference proteome</keyword>
<keyword id="KW-0808">Transferase</keyword>